<organism>
    <name type="scientific">Escherichia coli (strain 55989 / EAEC)</name>
    <dbReference type="NCBI Taxonomy" id="585055"/>
    <lineage>
        <taxon>Bacteria</taxon>
        <taxon>Pseudomonadati</taxon>
        <taxon>Pseudomonadota</taxon>
        <taxon>Gammaproteobacteria</taxon>
        <taxon>Enterobacterales</taxon>
        <taxon>Enterobacteriaceae</taxon>
        <taxon>Escherichia</taxon>
    </lineage>
</organism>
<proteinExistence type="inferred from homology"/>
<feature type="signal peptide" evidence="1">
    <location>
        <begin position="1"/>
        <end position="21"/>
    </location>
</feature>
<feature type="chain" id="PRO_1000184860" description="Multidrug resistance protein MdtA">
    <location>
        <begin position="22"/>
        <end position="415"/>
    </location>
</feature>
<feature type="region of interest" description="Disordered" evidence="2">
    <location>
        <begin position="32"/>
        <end position="60"/>
    </location>
</feature>
<feature type="region of interest" description="Disordered" evidence="2">
    <location>
        <begin position="392"/>
        <end position="415"/>
    </location>
</feature>
<feature type="compositionally biased region" description="Basic and acidic residues" evidence="2">
    <location>
        <begin position="399"/>
        <end position="415"/>
    </location>
</feature>
<comment type="function">
    <text evidence="1">The MdtABC tripartite complex confers resistance against novobiocin and deoxycholate.</text>
</comment>
<comment type="subunit">
    <text evidence="1">Part of a tripartite efflux system composed of MdtA, MdtB and MdtC.</text>
</comment>
<comment type="subcellular location">
    <subcellularLocation>
        <location evidence="1">Cell inner membrane</location>
        <topology evidence="1">Peripheral membrane protein</topology>
    </subcellularLocation>
</comment>
<comment type="induction">
    <text evidence="1">The mdtABC operon is transcriptionally activated by BaeR.</text>
</comment>
<comment type="similarity">
    <text evidence="1">Belongs to the membrane fusion protein (MFP) (TC 8.A.1) family.</text>
</comment>
<dbReference type="EMBL" id="CU928145">
    <property type="protein sequence ID" value="CAU98202.1"/>
    <property type="molecule type" value="Genomic_DNA"/>
</dbReference>
<dbReference type="RefSeq" id="WP_000678984.1">
    <property type="nucleotide sequence ID" value="NC_011748.1"/>
</dbReference>
<dbReference type="SMR" id="B7L9U7"/>
<dbReference type="KEGG" id="eck:EC55989_2330"/>
<dbReference type="HOGENOM" id="CLU_018816_2_0_6"/>
<dbReference type="Proteomes" id="UP000000746">
    <property type="component" value="Chromosome"/>
</dbReference>
<dbReference type="GO" id="GO:1990281">
    <property type="term" value="C:efflux pump complex"/>
    <property type="evidence" value="ECO:0007669"/>
    <property type="project" value="TreeGrafter"/>
</dbReference>
<dbReference type="GO" id="GO:0005886">
    <property type="term" value="C:plasma membrane"/>
    <property type="evidence" value="ECO:0007669"/>
    <property type="project" value="UniProtKB-SubCell"/>
</dbReference>
<dbReference type="GO" id="GO:0015562">
    <property type="term" value="F:efflux transmembrane transporter activity"/>
    <property type="evidence" value="ECO:0007669"/>
    <property type="project" value="TreeGrafter"/>
</dbReference>
<dbReference type="FunFam" id="2.40.420.20:FF:000001">
    <property type="entry name" value="Efflux RND transporter periplasmic adaptor subunit"/>
    <property type="match status" value="1"/>
</dbReference>
<dbReference type="FunFam" id="1.10.287.470:FF:000005">
    <property type="entry name" value="Multidrug resistance protein MdtA"/>
    <property type="match status" value="1"/>
</dbReference>
<dbReference type="FunFam" id="2.40.30.170:FF:000006">
    <property type="entry name" value="Multidrug resistance protein MdtA"/>
    <property type="match status" value="1"/>
</dbReference>
<dbReference type="Gene3D" id="2.40.30.170">
    <property type="match status" value="1"/>
</dbReference>
<dbReference type="Gene3D" id="2.40.420.20">
    <property type="match status" value="1"/>
</dbReference>
<dbReference type="Gene3D" id="2.40.50.100">
    <property type="match status" value="1"/>
</dbReference>
<dbReference type="Gene3D" id="1.10.287.470">
    <property type="entry name" value="Helix hairpin bin"/>
    <property type="match status" value="1"/>
</dbReference>
<dbReference type="HAMAP" id="MF_01422">
    <property type="entry name" value="MdtA"/>
    <property type="match status" value="1"/>
</dbReference>
<dbReference type="InterPro" id="IPR032317">
    <property type="entry name" value="CusB_D23"/>
</dbReference>
<dbReference type="InterPro" id="IPR022824">
    <property type="entry name" value="Multidrug-R_MdtA"/>
</dbReference>
<dbReference type="InterPro" id="IPR006143">
    <property type="entry name" value="RND_pump_MFP"/>
</dbReference>
<dbReference type="NCBIfam" id="NF008589">
    <property type="entry name" value="PRK11556.1"/>
    <property type="match status" value="1"/>
</dbReference>
<dbReference type="NCBIfam" id="TIGR01730">
    <property type="entry name" value="RND_mfp"/>
    <property type="match status" value="1"/>
</dbReference>
<dbReference type="PANTHER" id="PTHR30469">
    <property type="entry name" value="MULTIDRUG RESISTANCE PROTEIN MDTA"/>
    <property type="match status" value="1"/>
</dbReference>
<dbReference type="PANTHER" id="PTHR30469:SF12">
    <property type="entry name" value="MULTIDRUG RESISTANCE PROTEIN MDTA"/>
    <property type="match status" value="1"/>
</dbReference>
<dbReference type="Pfam" id="PF16576">
    <property type="entry name" value="HlyD_D23"/>
    <property type="match status" value="1"/>
</dbReference>
<dbReference type="SUPFAM" id="SSF111369">
    <property type="entry name" value="HlyD-like secretion proteins"/>
    <property type="match status" value="1"/>
</dbReference>
<evidence type="ECO:0000255" key="1">
    <source>
        <dbReference type="HAMAP-Rule" id="MF_01422"/>
    </source>
</evidence>
<evidence type="ECO:0000256" key="2">
    <source>
        <dbReference type="SAM" id="MobiDB-lite"/>
    </source>
</evidence>
<accession>B7L9U7</accession>
<gene>
    <name evidence="1" type="primary">mdtA</name>
    <name type="ordered locus">EC55989_2330</name>
</gene>
<sequence length="415" mass="44524">MKGSYKSRWVIVIVVVIAAIAAFWFWQGRNDSRSAAPGATKQAQQSPAGGRRGMRSGPLAPVQAATAVEQAVPRYLTGLGTIIAANTVTVRSRVDGQLMALHFQEGQQVKAGDLLAEIDPSQFKVALAQTQGQLAKDKATLANARRDLARYQQLAKTNLVSRQELDAQQALVSETEGTIKADEASVASAQLQLDWSRITAPVDGRVGLKQVDVGNQISSGDTTGIVVITQTHPIDLVFTLPESDIATVVQAQKAGKPLVVEAWDRTNSKKLSEGTLLSLDNQIDATTGTIKVKARFNNQDDALFPNQFVNARMLVDTEQNAVVIPTAALQMGNEGHFVWVLNSENKVSKHLVTPGIQDSQKVVIRAGISAGDRVVTDGIDRLTEGAKVEVVEAQSATTPEEKATSREYAKKGARS</sequence>
<reference key="1">
    <citation type="journal article" date="2009" name="PLoS Genet.">
        <title>Organised genome dynamics in the Escherichia coli species results in highly diverse adaptive paths.</title>
        <authorList>
            <person name="Touchon M."/>
            <person name="Hoede C."/>
            <person name="Tenaillon O."/>
            <person name="Barbe V."/>
            <person name="Baeriswyl S."/>
            <person name="Bidet P."/>
            <person name="Bingen E."/>
            <person name="Bonacorsi S."/>
            <person name="Bouchier C."/>
            <person name="Bouvet O."/>
            <person name="Calteau A."/>
            <person name="Chiapello H."/>
            <person name="Clermont O."/>
            <person name="Cruveiller S."/>
            <person name="Danchin A."/>
            <person name="Diard M."/>
            <person name="Dossat C."/>
            <person name="Karoui M.E."/>
            <person name="Frapy E."/>
            <person name="Garry L."/>
            <person name="Ghigo J.M."/>
            <person name="Gilles A.M."/>
            <person name="Johnson J."/>
            <person name="Le Bouguenec C."/>
            <person name="Lescat M."/>
            <person name="Mangenot S."/>
            <person name="Martinez-Jehanne V."/>
            <person name="Matic I."/>
            <person name="Nassif X."/>
            <person name="Oztas S."/>
            <person name="Petit M.A."/>
            <person name="Pichon C."/>
            <person name="Rouy Z."/>
            <person name="Ruf C.S."/>
            <person name="Schneider D."/>
            <person name="Tourret J."/>
            <person name="Vacherie B."/>
            <person name="Vallenet D."/>
            <person name="Medigue C."/>
            <person name="Rocha E.P.C."/>
            <person name="Denamur E."/>
        </authorList>
    </citation>
    <scope>NUCLEOTIDE SEQUENCE [LARGE SCALE GENOMIC DNA]</scope>
    <source>
        <strain>55989 / EAEC</strain>
    </source>
</reference>
<keyword id="KW-0997">Cell inner membrane</keyword>
<keyword id="KW-1003">Cell membrane</keyword>
<keyword id="KW-0472">Membrane</keyword>
<keyword id="KW-1185">Reference proteome</keyword>
<keyword id="KW-0732">Signal</keyword>
<keyword id="KW-0813">Transport</keyword>
<name>MDTA_ECO55</name>
<protein>
    <recommendedName>
        <fullName evidence="1">Multidrug resistance protein MdtA</fullName>
    </recommendedName>
    <alternativeName>
        <fullName evidence="1">Multidrug transporter MdtA</fullName>
    </alternativeName>
</protein>